<sequence length="328" mass="36395">MSEKIYEYKDENNWFIGKMTGHNLISGWGVKHTTIKKIDDLLDGIAATLDWENPKGYDVSVVRYQSPLSLITFIIDMINQETQREIKVTPHAGTILLIENAKLLAVYLPEGGVSTATFFATSEQGFGDIILIATRNEGKTKEFRNLFGQLGYRVENLNDYPELPEVAETGTTFEENARLKAETISRLTGKMVLADDSGLKVDALGGLPGVWSARFSGPDATDAKNNTKLLHELAMVFDQKKRSAQFHTTLVVAAPNKDSLVMEAEWPGYIATQPKGENGFGYDPVFIVGETGRHAAELEADQKNQLSHRGQAVRKLMEVFPAWQAKQS</sequence>
<gene>
    <name type="ordered locus">SpyM3_0263</name>
</gene>
<dbReference type="EC" id="3.6.1.66" evidence="1"/>
<dbReference type="EMBL" id="AE014074">
    <property type="protein sequence ID" value="AAM78870.1"/>
    <property type="molecule type" value="Genomic_DNA"/>
</dbReference>
<dbReference type="RefSeq" id="WP_011054210.1">
    <property type="nucleotide sequence ID" value="NC_004070.1"/>
</dbReference>
<dbReference type="SMR" id="P0DB58"/>
<dbReference type="KEGG" id="spg:SpyM3_0263"/>
<dbReference type="HOGENOM" id="CLU_863088_0_0_9"/>
<dbReference type="Proteomes" id="UP000000564">
    <property type="component" value="Chromosome"/>
</dbReference>
<dbReference type="GO" id="GO:0005829">
    <property type="term" value="C:cytosol"/>
    <property type="evidence" value="ECO:0007669"/>
    <property type="project" value="TreeGrafter"/>
</dbReference>
<dbReference type="GO" id="GO:0035870">
    <property type="term" value="F:dITP diphosphatase activity"/>
    <property type="evidence" value="ECO:0007669"/>
    <property type="project" value="RHEA"/>
</dbReference>
<dbReference type="GO" id="GO:0036220">
    <property type="term" value="F:ITP diphosphatase activity"/>
    <property type="evidence" value="ECO:0007669"/>
    <property type="project" value="UniProtKB-EC"/>
</dbReference>
<dbReference type="GO" id="GO:0046872">
    <property type="term" value="F:metal ion binding"/>
    <property type="evidence" value="ECO:0007669"/>
    <property type="project" value="UniProtKB-KW"/>
</dbReference>
<dbReference type="GO" id="GO:0000166">
    <property type="term" value="F:nucleotide binding"/>
    <property type="evidence" value="ECO:0007669"/>
    <property type="project" value="UniProtKB-KW"/>
</dbReference>
<dbReference type="GO" id="GO:0017111">
    <property type="term" value="F:ribonucleoside triphosphate phosphatase activity"/>
    <property type="evidence" value="ECO:0007669"/>
    <property type="project" value="InterPro"/>
</dbReference>
<dbReference type="GO" id="GO:0036222">
    <property type="term" value="F:XTP diphosphatase activity"/>
    <property type="evidence" value="ECO:0007669"/>
    <property type="project" value="RHEA"/>
</dbReference>
<dbReference type="GO" id="GO:0009117">
    <property type="term" value="P:nucleotide metabolic process"/>
    <property type="evidence" value="ECO:0007669"/>
    <property type="project" value="UniProtKB-KW"/>
</dbReference>
<dbReference type="GO" id="GO:0009146">
    <property type="term" value="P:purine nucleoside triphosphate catabolic process"/>
    <property type="evidence" value="ECO:0007669"/>
    <property type="project" value="UniProtKB-UniRule"/>
</dbReference>
<dbReference type="CDD" id="cd00515">
    <property type="entry name" value="HAM1"/>
    <property type="match status" value="1"/>
</dbReference>
<dbReference type="FunFam" id="3.90.950.10:FF:000001">
    <property type="entry name" value="dITP/XTP pyrophosphatase"/>
    <property type="match status" value="1"/>
</dbReference>
<dbReference type="Gene3D" id="3.90.950.10">
    <property type="match status" value="1"/>
</dbReference>
<dbReference type="HAMAP" id="MF_01405">
    <property type="entry name" value="Non_canon_purine_NTPase"/>
    <property type="match status" value="1"/>
</dbReference>
<dbReference type="InterPro" id="IPR020922">
    <property type="entry name" value="dITP/XTP_pyrophosphatase"/>
</dbReference>
<dbReference type="InterPro" id="IPR029001">
    <property type="entry name" value="ITPase-like_fam"/>
</dbReference>
<dbReference type="InterPro" id="IPR002637">
    <property type="entry name" value="RdgB/HAM1"/>
</dbReference>
<dbReference type="NCBIfam" id="NF002698">
    <property type="entry name" value="PRK02491.1"/>
    <property type="match status" value="1"/>
</dbReference>
<dbReference type="NCBIfam" id="NF011397">
    <property type="entry name" value="PRK14822.1"/>
    <property type="match status" value="1"/>
</dbReference>
<dbReference type="NCBIfam" id="TIGR00042">
    <property type="entry name" value="RdgB/HAM1 family non-canonical purine NTP pyrophosphatase"/>
    <property type="match status" value="1"/>
</dbReference>
<dbReference type="PANTHER" id="PTHR11067:SF9">
    <property type="entry name" value="INOSINE TRIPHOSPHATE PYROPHOSPHATASE"/>
    <property type="match status" value="1"/>
</dbReference>
<dbReference type="PANTHER" id="PTHR11067">
    <property type="entry name" value="INOSINE TRIPHOSPHATE PYROPHOSPHATASE/HAM1 PROTEIN"/>
    <property type="match status" value="1"/>
</dbReference>
<dbReference type="Pfam" id="PF01725">
    <property type="entry name" value="Ham1p_like"/>
    <property type="match status" value="1"/>
</dbReference>
<dbReference type="SUPFAM" id="SSF52972">
    <property type="entry name" value="ITPase-like"/>
    <property type="match status" value="1"/>
</dbReference>
<organism>
    <name type="scientific">Streptococcus pyogenes serotype M3 (strain ATCC BAA-595 / MGAS315)</name>
    <dbReference type="NCBI Taxonomy" id="198466"/>
    <lineage>
        <taxon>Bacteria</taxon>
        <taxon>Bacillati</taxon>
        <taxon>Bacillota</taxon>
        <taxon>Bacilli</taxon>
        <taxon>Lactobacillales</taxon>
        <taxon>Streptococcaceae</taxon>
        <taxon>Streptococcus</taxon>
    </lineage>
</organism>
<comment type="function">
    <text evidence="1">Pyrophosphatase that catalyzes the hydrolysis of nucleoside triphosphates to their monophosphate derivatives, with a high preference for the non-canonical purine nucleotides XTP (xanthosine triphosphate), dITP (deoxyinosine triphosphate) and ITP. Seems to function as a house-cleaning enzyme that removes non-canonical purine nucleotides from the nucleotide pool, thus preventing their incorporation into DNA/RNA and avoiding chromosomal lesions.</text>
</comment>
<comment type="catalytic activity">
    <reaction evidence="1">
        <text>XTP + H2O = XMP + diphosphate + H(+)</text>
        <dbReference type="Rhea" id="RHEA:28610"/>
        <dbReference type="ChEBI" id="CHEBI:15377"/>
        <dbReference type="ChEBI" id="CHEBI:15378"/>
        <dbReference type="ChEBI" id="CHEBI:33019"/>
        <dbReference type="ChEBI" id="CHEBI:57464"/>
        <dbReference type="ChEBI" id="CHEBI:61314"/>
        <dbReference type="EC" id="3.6.1.66"/>
    </reaction>
</comment>
<comment type="catalytic activity">
    <reaction evidence="1">
        <text>dITP + H2O = dIMP + diphosphate + H(+)</text>
        <dbReference type="Rhea" id="RHEA:28342"/>
        <dbReference type="ChEBI" id="CHEBI:15377"/>
        <dbReference type="ChEBI" id="CHEBI:15378"/>
        <dbReference type="ChEBI" id="CHEBI:33019"/>
        <dbReference type="ChEBI" id="CHEBI:61194"/>
        <dbReference type="ChEBI" id="CHEBI:61382"/>
        <dbReference type="EC" id="3.6.1.66"/>
    </reaction>
</comment>
<comment type="catalytic activity">
    <reaction evidence="1">
        <text>ITP + H2O = IMP + diphosphate + H(+)</text>
        <dbReference type="Rhea" id="RHEA:29399"/>
        <dbReference type="ChEBI" id="CHEBI:15377"/>
        <dbReference type="ChEBI" id="CHEBI:15378"/>
        <dbReference type="ChEBI" id="CHEBI:33019"/>
        <dbReference type="ChEBI" id="CHEBI:58053"/>
        <dbReference type="ChEBI" id="CHEBI:61402"/>
        <dbReference type="EC" id="3.6.1.66"/>
    </reaction>
</comment>
<comment type="cofactor">
    <cofactor evidence="1">
        <name>Mg(2+)</name>
        <dbReference type="ChEBI" id="CHEBI:18420"/>
    </cofactor>
    <text evidence="1">Binds 1 Mg(2+) ion per subunit.</text>
</comment>
<comment type="subunit">
    <text evidence="1">Homodimer.</text>
</comment>
<comment type="similarity">
    <text evidence="1 2">Belongs to the HAM1 NTPase family.</text>
</comment>
<feature type="chain" id="PRO_0000178243" description="dITP/XTP pyrophosphatase">
    <location>
        <begin position="1"/>
        <end position="328"/>
    </location>
</feature>
<feature type="region of interest" description="Unknown">
    <location>
        <begin position="1"/>
        <end position="129"/>
    </location>
</feature>
<feature type="region of interest" description="NTP pyrophosphatase">
    <location>
        <begin position="130"/>
        <end position="324"/>
    </location>
</feature>
<feature type="active site" description="Proton acceptor" evidence="1">
    <location>
        <position position="196"/>
    </location>
</feature>
<feature type="binding site" evidence="1">
    <location>
        <begin position="134"/>
        <end position="139"/>
    </location>
    <ligand>
        <name>substrate</name>
    </ligand>
</feature>
<feature type="binding site" evidence="1">
    <location>
        <position position="196"/>
    </location>
    <ligand>
        <name>Mg(2+)</name>
        <dbReference type="ChEBI" id="CHEBI:18420"/>
    </ligand>
</feature>
<feature type="binding site" evidence="1">
    <location>
        <position position="197"/>
    </location>
    <ligand>
        <name>substrate</name>
    </ligand>
</feature>
<feature type="binding site" evidence="1">
    <location>
        <begin position="280"/>
        <end position="283"/>
    </location>
    <ligand>
        <name>substrate</name>
    </ligand>
</feature>
<feature type="binding site" evidence="1">
    <location>
        <position position="303"/>
    </location>
    <ligand>
        <name>substrate</name>
    </ligand>
</feature>
<feature type="binding site" evidence="1">
    <location>
        <begin position="308"/>
        <end position="309"/>
    </location>
    <ligand>
        <name>substrate</name>
    </ligand>
</feature>
<protein>
    <recommendedName>
        <fullName evidence="1">dITP/XTP pyrophosphatase</fullName>
        <ecNumber evidence="1">3.6.1.66</ecNumber>
    </recommendedName>
    <alternativeName>
        <fullName evidence="1">Non-canonical purine NTP pyrophosphatase</fullName>
    </alternativeName>
    <alternativeName>
        <fullName evidence="1">Non-standard purine NTP pyrophosphatase</fullName>
    </alternativeName>
    <alternativeName>
        <fullName evidence="1">Nucleoside-triphosphate diphosphatase</fullName>
    </alternativeName>
    <alternativeName>
        <fullName evidence="1">Nucleoside-triphosphate pyrophosphatase</fullName>
        <shortName evidence="1">NTPase</shortName>
    </alternativeName>
</protein>
<proteinExistence type="inferred from homology"/>
<reference key="1">
    <citation type="journal article" date="2002" name="Proc. Natl. Acad. Sci. U.S.A.">
        <title>Genome sequence of a serotype M3 strain of group A Streptococcus: phage-encoded toxins, the high-virulence phenotype, and clone emergence.</title>
        <authorList>
            <person name="Beres S.B."/>
            <person name="Sylva G.L."/>
            <person name="Barbian K.D."/>
            <person name="Lei B."/>
            <person name="Hoff J.S."/>
            <person name="Mammarella N.D."/>
            <person name="Liu M.-Y."/>
            <person name="Smoot J.C."/>
            <person name="Porcella S.F."/>
            <person name="Parkins L.D."/>
            <person name="Campbell D.S."/>
            <person name="Smith T.M."/>
            <person name="McCormick J.K."/>
            <person name="Leung D.Y.M."/>
            <person name="Schlievert P.M."/>
            <person name="Musser J.M."/>
        </authorList>
    </citation>
    <scope>NUCLEOTIDE SEQUENCE [LARGE SCALE GENOMIC DNA]</scope>
    <source>
        <strain>ATCC BAA-595 / MGAS315</strain>
    </source>
</reference>
<name>IXTPA_STRP3</name>
<evidence type="ECO:0000255" key="1">
    <source>
        <dbReference type="HAMAP-Rule" id="MF_01405"/>
    </source>
</evidence>
<evidence type="ECO:0000305" key="2"/>
<accession>P0DB58</accession>
<accession>Q8K8I7</accession>
<keyword id="KW-0378">Hydrolase</keyword>
<keyword id="KW-0460">Magnesium</keyword>
<keyword id="KW-0479">Metal-binding</keyword>
<keyword id="KW-0546">Nucleotide metabolism</keyword>
<keyword id="KW-0547">Nucleotide-binding</keyword>